<reference key="1">
    <citation type="journal article" date="2007" name="Genome Res.">
        <title>Genome characteristics of facultatively symbiotic Frankia sp. strains reflect host range and host plant biogeography.</title>
        <authorList>
            <person name="Normand P."/>
            <person name="Lapierre P."/>
            <person name="Tisa L.S."/>
            <person name="Gogarten J.P."/>
            <person name="Alloisio N."/>
            <person name="Bagnarol E."/>
            <person name="Bassi C.A."/>
            <person name="Berry A.M."/>
            <person name="Bickhart D.M."/>
            <person name="Choisne N."/>
            <person name="Couloux A."/>
            <person name="Cournoyer B."/>
            <person name="Cruveiller S."/>
            <person name="Daubin V."/>
            <person name="Demange N."/>
            <person name="Francino M.P."/>
            <person name="Goltsman E."/>
            <person name="Huang Y."/>
            <person name="Kopp O.R."/>
            <person name="Labarre L."/>
            <person name="Lapidus A."/>
            <person name="Lavire C."/>
            <person name="Marechal J."/>
            <person name="Martinez M."/>
            <person name="Mastronunzio J.E."/>
            <person name="Mullin B.C."/>
            <person name="Niemann J."/>
            <person name="Pujic P."/>
            <person name="Rawnsley T."/>
            <person name="Rouy Z."/>
            <person name="Schenowitz C."/>
            <person name="Sellstedt A."/>
            <person name="Tavares F."/>
            <person name="Tomkins J.P."/>
            <person name="Vallenet D."/>
            <person name="Valverde C."/>
            <person name="Wall L.G."/>
            <person name="Wang Y."/>
            <person name="Medigue C."/>
            <person name="Benson D.R."/>
        </authorList>
    </citation>
    <scope>NUCLEOTIDE SEQUENCE [LARGE SCALE GENOMIC DNA]</scope>
    <source>
        <strain>EAN1pec</strain>
    </source>
</reference>
<comment type="function">
    <text evidence="1">Plays an important role in the de novo pathway of purine nucleotide biosynthesis. Catalyzes the first committed step in the biosynthesis of AMP from IMP.</text>
</comment>
<comment type="catalytic activity">
    <reaction evidence="1">
        <text>IMP + L-aspartate + GTP = N(6)-(1,2-dicarboxyethyl)-AMP + GDP + phosphate + 2 H(+)</text>
        <dbReference type="Rhea" id="RHEA:15753"/>
        <dbReference type="ChEBI" id="CHEBI:15378"/>
        <dbReference type="ChEBI" id="CHEBI:29991"/>
        <dbReference type="ChEBI" id="CHEBI:37565"/>
        <dbReference type="ChEBI" id="CHEBI:43474"/>
        <dbReference type="ChEBI" id="CHEBI:57567"/>
        <dbReference type="ChEBI" id="CHEBI:58053"/>
        <dbReference type="ChEBI" id="CHEBI:58189"/>
        <dbReference type="EC" id="6.3.4.4"/>
    </reaction>
</comment>
<comment type="cofactor">
    <cofactor evidence="1">
        <name>Mg(2+)</name>
        <dbReference type="ChEBI" id="CHEBI:18420"/>
    </cofactor>
    <text evidence="1">Binds 1 Mg(2+) ion per subunit.</text>
</comment>
<comment type="pathway">
    <text evidence="1">Purine metabolism; AMP biosynthesis via de novo pathway; AMP from IMP: step 1/2.</text>
</comment>
<comment type="subunit">
    <text evidence="1">Homodimer.</text>
</comment>
<comment type="subcellular location">
    <subcellularLocation>
        <location evidence="1">Cytoplasm</location>
    </subcellularLocation>
</comment>
<comment type="similarity">
    <text evidence="1">Belongs to the adenylosuccinate synthetase family.</text>
</comment>
<proteinExistence type="inferred from homology"/>
<feature type="chain" id="PRO_1000089295" description="Adenylosuccinate synthetase">
    <location>
        <begin position="1"/>
        <end position="427"/>
    </location>
</feature>
<feature type="active site" description="Proton acceptor" evidence="1">
    <location>
        <position position="13"/>
    </location>
</feature>
<feature type="active site" description="Proton donor" evidence="1">
    <location>
        <position position="41"/>
    </location>
</feature>
<feature type="binding site" evidence="1">
    <location>
        <begin position="12"/>
        <end position="18"/>
    </location>
    <ligand>
        <name>GTP</name>
        <dbReference type="ChEBI" id="CHEBI:37565"/>
    </ligand>
</feature>
<feature type="binding site" description="in other chain" evidence="1">
    <location>
        <begin position="13"/>
        <end position="16"/>
    </location>
    <ligand>
        <name>IMP</name>
        <dbReference type="ChEBI" id="CHEBI:58053"/>
        <note>ligand shared between dimeric partners</note>
    </ligand>
</feature>
<feature type="binding site" evidence="1">
    <location>
        <position position="13"/>
    </location>
    <ligand>
        <name>Mg(2+)</name>
        <dbReference type="ChEBI" id="CHEBI:18420"/>
    </ligand>
</feature>
<feature type="binding site" description="in other chain" evidence="1">
    <location>
        <begin position="38"/>
        <end position="41"/>
    </location>
    <ligand>
        <name>IMP</name>
        <dbReference type="ChEBI" id="CHEBI:58053"/>
        <note>ligand shared between dimeric partners</note>
    </ligand>
</feature>
<feature type="binding site" evidence="1">
    <location>
        <begin position="40"/>
        <end position="42"/>
    </location>
    <ligand>
        <name>GTP</name>
        <dbReference type="ChEBI" id="CHEBI:37565"/>
    </ligand>
</feature>
<feature type="binding site" evidence="1">
    <location>
        <position position="40"/>
    </location>
    <ligand>
        <name>Mg(2+)</name>
        <dbReference type="ChEBI" id="CHEBI:18420"/>
    </ligand>
</feature>
<feature type="binding site" description="in other chain" evidence="1">
    <location>
        <position position="128"/>
    </location>
    <ligand>
        <name>IMP</name>
        <dbReference type="ChEBI" id="CHEBI:58053"/>
        <note>ligand shared between dimeric partners</note>
    </ligand>
</feature>
<feature type="binding site" evidence="1">
    <location>
        <position position="142"/>
    </location>
    <ligand>
        <name>IMP</name>
        <dbReference type="ChEBI" id="CHEBI:58053"/>
        <note>ligand shared between dimeric partners</note>
    </ligand>
</feature>
<feature type="binding site" description="in other chain" evidence="1">
    <location>
        <position position="223"/>
    </location>
    <ligand>
        <name>IMP</name>
        <dbReference type="ChEBI" id="CHEBI:58053"/>
        <note>ligand shared between dimeric partners</note>
    </ligand>
</feature>
<feature type="binding site" description="in other chain" evidence="1">
    <location>
        <position position="238"/>
    </location>
    <ligand>
        <name>IMP</name>
        <dbReference type="ChEBI" id="CHEBI:58053"/>
        <note>ligand shared between dimeric partners</note>
    </ligand>
</feature>
<feature type="binding site" evidence="1">
    <location>
        <begin position="298"/>
        <end position="304"/>
    </location>
    <ligand>
        <name>substrate</name>
    </ligand>
</feature>
<feature type="binding site" description="in other chain" evidence="1">
    <location>
        <position position="302"/>
    </location>
    <ligand>
        <name>IMP</name>
        <dbReference type="ChEBI" id="CHEBI:58053"/>
        <note>ligand shared between dimeric partners</note>
    </ligand>
</feature>
<feature type="binding site" evidence="1">
    <location>
        <position position="304"/>
    </location>
    <ligand>
        <name>GTP</name>
        <dbReference type="ChEBI" id="CHEBI:37565"/>
    </ligand>
</feature>
<feature type="binding site" evidence="1">
    <location>
        <begin position="330"/>
        <end position="332"/>
    </location>
    <ligand>
        <name>GTP</name>
        <dbReference type="ChEBI" id="CHEBI:37565"/>
    </ligand>
</feature>
<feature type="binding site" evidence="1">
    <location>
        <begin position="412"/>
        <end position="414"/>
    </location>
    <ligand>
        <name>GTP</name>
        <dbReference type="ChEBI" id="CHEBI:37565"/>
    </ligand>
</feature>
<keyword id="KW-0963">Cytoplasm</keyword>
<keyword id="KW-0342">GTP-binding</keyword>
<keyword id="KW-0436">Ligase</keyword>
<keyword id="KW-0460">Magnesium</keyword>
<keyword id="KW-0479">Metal-binding</keyword>
<keyword id="KW-0547">Nucleotide-binding</keyword>
<keyword id="KW-0658">Purine biosynthesis</keyword>
<protein>
    <recommendedName>
        <fullName evidence="1">Adenylosuccinate synthetase</fullName>
        <shortName evidence="1">AMPSase</shortName>
        <shortName evidence="1">AdSS</shortName>
        <ecNumber evidence="1">6.3.4.4</ecNumber>
    </recommendedName>
    <alternativeName>
        <fullName evidence="1">IMP--aspartate ligase</fullName>
    </alternativeName>
</protein>
<organism>
    <name type="scientific">Parafrankia sp. (strain EAN1pec)</name>
    <dbReference type="NCBI Taxonomy" id="298653"/>
    <lineage>
        <taxon>Bacteria</taxon>
        <taxon>Bacillati</taxon>
        <taxon>Actinomycetota</taxon>
        <taxon>Actinomycetes</taxon>
        <taxon>Frankiales</taxon>
        <taxon>Frankiaceae</taxon>
        <taxon>Parafrankia</taxon>
    </lineage>
</organism>
<sequence>MPALVLIGAQWGDEGKGKATDLLGGAVDYVVRYQGGNNAGHTVVIGAESYALHLIPSGVLRTDCVPVIGNGVVIDPGVLLSEMDGLQARGVDVSRLLISADAHLIMPHHRALDRVTERYLGKARIGTTGRGIGPAYGDKVARTGIRVQDLLDPGIFRQKLELALREKNQVLTKVYNRRRIEVDEVVEEYAAYAERLTPHIADTGLLLDTALREGKVVLLEGSQGTLLDVDHGTYPFVTSSNPTAGYAATGAGIGPTRINRVIGIIKAYTTRVGAGPFPTELDDKVGEELRRIGGEFGVTTGRARRTGWFDAVIARYAVRVNGLTDLFLTKLDVLSGFDTVPVCVGYEINGQRTDEMPMTQTEFHHAKPIYVELPGWHEDISGVTRFADLPEAAQAYVATLEEMAGAPVSAVGVGPGRAQTLVINELI</sequence>
<evidence type="ECO:0000255" key="1">
    <source>
        <dbReference type="HAMAP-Rule" id="MF_00011"/>
    </source>
</evidence>
<name>PURA_PARS2</name>
<accession>A8LDR3</accession>
<gene>
    <name evidence="1" type="primary">purA</name>
    <name type="ordered locus">Franean1_0211</name>
</gene>
<dbReference type="EC" id="6.3.4.4" evidence="1"/>
<dbReference type="EMBL" id="CP000820">
    <property type="protein sequence ID" value="ABW09678.1"/>
    <property type="molecule type" value="Genomic_DNA"/>
</dbReference>
<dbReference type="RefSeq" id="WP_012157655.1">
    <property type="nucleotide sequence ID" value="NC_009921.1"/>
</dbReference>
<dbReference type="SMR" id="A8LDR3"/>
<dbReference type="STRING" id="298653.Franean1_0211"/>
<dbReference type="KEGG" id="fre:Franean1_0211"/>
<dbReference type="eggNOG" id="COG0104">
    <property type="taxonomic scope" value="Bacteria"/>
</dbReference>
<dbReference type="HOGENOM" id="CLU_029848_0_0_11"/>
<dbReference type="UniPathway" id="UPA00075">
    <property type="reaction ID" value="UER00335"/>
</dbReference>
<dbReference type="GO" id="GO:0005737">
    <property type="term" value="C:cytoplasm"/>
    <property type="evidence" value="ECO:0007669"/>
    <property type="project" value="UniProtKB-SubCell"/>
</dbReference>
<dbReference type="GO" id="GO:0004019">
    <property type="term" value="F:adenylosuccinate synthase activity"/>
    <property type="evidence" value="ECO:0007669"/>
    <property type="project" value="UniProtKB-UniRule"/>
</dbReference>
<dbReference type="GO" id="GO:0005525">
    <property type="term" value="F:GTP binding"/>
    <property type="evidence" value="ECO:0007669"/>
    <property type="project" value="UniProtKB-UniRule"/>
</dbReference>
<dbReference type="GO" id="GO:0000287">
    <property type="term" value="F:magnesium ion binding"/>
    <property type="evidence" value="ECO:0007669"/>
    <property type="project" value="UniProtKB-UniRule"/>
</dbReference>
<dbReference type="GO" id="GO:0044208">
    <property type="term" value="P:'de novo' AMP biosynthetic process"/>
    <property type="evidence" value="ECO:0007669"/>
    <property type="project" value="UniProtKB-UniRule"/>
</dbReference>
<dbReference type="GO" id="GO:0046040">
    <property type="term" value="P:IMP metabolic process"/>
    <property type="evidence" value="ECO:0007669"/>
    <property type="project" value="TreeGrafter"/>
</dbReference>
<dbReference type="CDD" id="cd03108">
    <property type="entry name" value="AdSS"/>
    <property type="match status" value="1"/>
</dbReference>
<dbReference type="FunFam" id="1.10.300.10:FF:000001">
    <property type="entry name" value="Adenylosuccinate synthetase"/>
    <property type="match status" value="1"/>
</dbReference>
<dbReference type="FunFam" id="3.90.170.10:FF:000001">
    <property type="entry name" value="Adenylosuccinate synthetase"/>
    <property type="match status" value="1"/>
</dbReference>
<dbReference type="Gene3D" id="3.40.440.10">
    <property type="entry name" value="Adenylosuccinate Synthetase, subunit A, domain 1"/>
    <property type="match status" value="1"/>
</dbReference>
<dbReference type="Gene3D" id="1.10.300.10">
    <property type="entry name" value="Adenylosuccinate Synthetase, subunit A, domain 2"/>
    <property type="match status" value="1"/>
</dbReference>
<dbReference type="Gene3D" id="3.90.170.10">
    <property type="entry name" value="Adenylosuccinate Synthetase, subunit A, domain 3"/>
    <property type="match status" value="1"/>
</dbReference>
<dbReference type="HAMAP" id="MF_00011">
    <property type="entry name" value="Adenylosucc_synth"/>
    <property type="match status" value="1"/>
</dbReference>
<dbReference type="InterPro" id="IPR018220">
    <property type="entry name" value="Adenylosuccin_syn_GTP-bd"/>
</dbReference>
<dbReference type="InterPro" id="IPR033128">
    <property type="entry name" value="Adenylosuccin_syn_Lys_AS"/>
</dbReference>
<dbReference type="InterPro" id="IPR042109">
    <property type="entry name" value="Adenylosuccinate_synth_dom1"/>
</dbReference>
<dbReference type="InterPro" id="IPR042110">
    <property type="entry name" value="Adenylosuccinate_synth_dom2"/>
</dbReference>
<dbReference type="InterPro" id="IPR042111">
    <property type="entry name" value="Adenylosuccinate_synth_dom3"/>
</dbReference>
<dbReference type="InterPro" id="IPR001114">
    <property type="entry name" value="Adenylosuccinate_synthetase"/>
</dbReference>
<dbReference type="InterPro" id="IPR027417">
    <property type="entry name" value="P-loop_NTPase"/>
</dbReference>
<dbReference type="NCBIfam" id="NF002223">
    <property type="entry name" value="PRK01117.1"/>
    <property type="match status" value="1"/>
</dbReference>
<dbReference type="NCBIfam" id="TIGR00184">
    <property type="entry name" value="purA"/>
    <property type="match status" value="1"/>
</dbReference>
<dbReference type="PANTHER" id="PTHR11846">
    <property type="entry name" value="ADENYLOSUCCINATE SYNTHETASE"/>
    <property type="match status" value="1"/>
</dbReference>
<dbReference type="PANTHER" id="PTHR11846:SF0">
    <property type="entry name" value="ADENYLOSUCCINATE SYNTHETASE"/>
    <property type="match status" value="1"/>
</dbReference>
<dbReference type="Pfam" id="PF00709">
    <property type="entry name" value="Adenylsucc_synt"/>
    <property type="match status" value="1"/>
</dbReference>
<dbReference type="SMART" id="SM00788">
    <property type="entry name" value="Adenylsucc_synt"/>
    <property type="match status" value="1"/>
</dbReference>
<dbReference type="SUPFAM" id="SSF52540">
    <property type="entry name" value="P-loop containing nucleoside triphosphate hydrolases"/>
    <property type="match status" value="1"/>
</dbReference>
<dbReference type="PROSITE" id="PS01266">
    <property type="entry name" value="ADENYLOSUCCIN_SYN_1"/>
    <property type="match status" value="1"/>
</dbReference>
<dbReference type="PROSITE" id="PS00513">
    <property type="entry name" value="ADENYLOSUCCIN_SYN_2"/>
    <property type="match status" value="1"/>
</dbReference>